<comment type="function">
    <text>May be involved in the production of the exopolysaccharide (EPS) component of the extracellular matrix during biofilm formation. EPS is responsible for the adhesion of chains of cells into bundles. Required for biofilm maintenance.</text>
</comment>
<comment type="induction">
    <text evidence="1">Repressed by SinR.</text>
</comment>
<comment type="similarity">
    <text evidence="2">Belongs to the glycosyltransferase 2 family.</text>
</comment>
<proteinExistence type="evidence at transcript level"/>
<accession>P71054</accession>
<accession>O08173</accession>
<accession>Q795I3</accession>
<protein>
    <recommendedName>
        <fullName>Putative glycosyltransferase EpsE</fullName>
        <ecNumber>2.4.-.-</ecNumber>
    </recommendedName>
</protein>
<organism>
    <name type="scientific">Bacillus subtilis (strain 168)</name>
    <dbReference type="NCBI Taxonomy" id="224308"/>
    <lineage>
        <taxon>Bacteria</taxon>
        <taxon>Bacillati</taxon>
        <taxon>Bacillota</taxon>
        <taxon>Bacilli</taxon>
        <taxon>Bacillales</taxon>
        <taxon>Bacillaceae</taxon>
        <taxon>Bacillus</taxon>
    </lineage>
</organism>
<keyword id="KW-0270">Exopolysaccharide synthesis</keyword>
<keyword id="KW-0328">Glycosyltransferase</keyword>
<keyword id="KW-1185">Reference proteome</keyword>
<keyword id="KW-0808">Transferase</keyword>
<name>EPSE_BACSU</name>
<reference key="1">
    <citation type="journal article" date="1996" name="Microbiology">
        <title>Integrated mapping and sequencing of a 115 kb DNA fragment from Bacillus subtilis: sequence analysis of a 21 kb segment containing the sigL locus.</title>
        <authorList>
            <person name="Fabret C."/>
            <person name="Quentin Y."/>
            <person name="Chapal N."/>
            <person name="Guiseppi A."/>
            <person name="Haiech J."/>
            <person name="Denizot F."/>
        </authorList>
    </citation>
    <scope>NUCLEOTIDE SEQUENCE [GENOMIC DNA]</scope>
    <source>
        <strain>168trp</strain>
    </source>
</reference>
<reference key="2">
    <citation type="submission" date="1997-04" db="EMBL/GenBank/DDBJ databases">
        <authorList>
            <person name="Denizot F."/>
        </authorList>
    </citation>
    <scope>NUCLEOTIDE SEQUENCE [GENOMIC DNA]</scope>
</reference>
<reference key="3">
    <citation type="journal article" date="1997" name="Nature">
        <title>The complete genome sequence of the Gram-positive bacterium Bacillus subtilis.</title>
        <authorList>
            <person name="Kunst F."/>
            <person name="Ogasawara N."/>
            <person name="Moszer I."/>
            <person name="Albertini A.M."/>
            <person name="Alloni G."/>
            <person name="Azevedo V."/>
            <person name="Bertero M.G."/>
            <person name="Bessieres P."/>
            <person name="Bolotin A."/>
            <person name="Borchert S."/>
            <person name="Borriss R."/>
            <person name="Boursier L."/>
            <person name="Brans A."/>
            <person name="Braun M."/>
            <person name="Brignell S.C."/>
            <person name="Bron S."/>
            <person name="Brouillet S."/>
            <person name="Bruschi C.V."/>
            <person name="Caldwell B."/>
            <person name="Capuano V."/>
            <person name="Carter N.M."/>
            <person name="Choi S.-K."/>
            <person name="Codani J.-J."/>
            <person name="Connerton I.F."/>
            <person name="Cummings N.J."/>
            <person name="Daniel R.A."/>
            <person name="Denizot F."/>
            <person name="Devine K.M."/>
            <person name="Duesterhoeft A."/>
            <person name="Ehrlich S.D."/>
            <person name="Emmerson P.T."/>
            <person name="Entian K.-D."/>
            <person name="Errington J."/>
            <person name="Fabret C."/>
            <person name="Ferrari E."/>
            <person name="Foulger D."/>
            <person name="Fritz C."/>
            <person name="Fujita M."/>
            <person name="Fujita Y."/>
            <person name="Fuma S."/>
            <person name="Galizzi A."/>
            <person name="Galleron N."/>
            <person name="Ghim S.-Y."/>
            <person name="Glaser P."/>
            <person name="Goffeau A."/>
            <person name="Golightly E.J."/>
            <person name="Grandi G."/>
            <person name="Guiseppi G."/>
            <person name="Guy B.J."/>
            <person name="Haga K."/>
            <person name="Haiech J."/>
            <person name="Harwood C.R."/>
            <person name="Henaut A."/>
            <person name="Hilbert H."/>
            <person name="Holsappel S."/>
            <person name="Hosono S."/>
            <person name="Hullo M.-F."/>
            <person name="Itaya M."/>
            <person name="Jones L.-M."/>
            <person name="Joris B."/>
            <person name="Karamata D."/>
            <person name="Kasahara Y."/>
            <person name="Klaerr-Blanchard M."/>
            <person name="Klein C."/>
            <person name="Kobayashi Y."/>
            <person name="Koetter P."/>
            <person name="Koningstein G."/>
            <person name="Krogh S."/>
            <person name="Kumano M."/>
            <person name="Kurita K."/>
            <person name="Lapidus A."/>
            <person name="Lardinois S."/>
            <person name="Lauber J."/>
            <person name="Lazarevic V."/>
            <person name="Lee S.-M."/>
            <person name="Levine A."/>
            <person name="Liu H."/>
            <person name="Masuda S."/>
            <person name="Mauel C."/>
            <person name="Medigue C."/>
            <person name="Medina N."/>
            <person name="Mellado R.P."/>
            <person name="Mizuno M."/>
            <person name="Moestl D."/>
            <person name="Nakai S."/>
            <person name="Noback M."/>
            <person name="Noone D."/>
            <person name="O'Reilly M."/>
            <person name="Ogawa K."/>
            <person name="Ogiwara A."/>
            <person name="Oudega B."/>
            <person name="Park S.-H."/>
            <person name="Parro V."/>
            <person name="Pohl T.M."/>
            <person name="Portetelle D."/>
            <person name="Porwollik S."/>
            <person name="Prescott A.M."/>
            <person name="Presecan E."/>
            <person name="Pujic P."/>
            <person name="Purnelle B."/>
            <person name="Rapoport G."/>
            <person name="Rey M."/>
            <person name="Reynolds S."/>
            <person name="Rieger M."/>
            <person name="Rivolta C."/>
            <person name="Rocha E."/>
            <person name="Roche B."/>
            <person name="Rose M."/>
            <person name="Sadaie Y."/>
            <person name="Sato T."/>
            <person name="Scanlan E."/>
            <person name="Schleich S."/>
            <person name="Schroeter R."/>
            <person name="Scoffone F."/>
            <person name="Sekiguchi J."/>
            <person name="Sekowska A."/>
            <person name="Seror S.J."/>
            <person name="Serror P."/>
            <person name="Shin B.-S."/>
            <person name="Soldo B."/>
            <person name="Sorokin A."/>
            <person name="Tacconi E."/>
            <person name="Takagi T."/>
            <person name="Takahashi H."/>
            <person name="Takemaru K."/>
            <person name="Takeuchi M."/>
            <person name="Tamakoshi A."/>
            <person name="Tanaka T."/>
            <person name="Terpstra P."/>
            <person name="Tognoni A."/>
            <person name="Tosato V."/>
            <person name="Uchiyama S."/>
            <person name="Vandenbol M."/>
            <person name="Vannier F."/>
            <person name="Vassarotti A."/>
            <person name="Viari A."/>
            <person name="Wambutt R."/>
            <person name="Wedler E."/>
            <person name="Wedler H."/>
            <person name="Weitzenegger T."/>
            <person name="Winters P."/>
            <person name="Wipat A."/>
            <person name="Yamamoto H."/>
            <person name="Yamane K."/>
            <person name="Yasumoto K."/>
            <person name="Yata K."/>
            <person name="Yoshida K."/>
            <person name="Yoshikawa H.-F."/>
            <person name="Zumstein E."/>
            <person name="Yoshikawa H."/>
            <person name="Danchin A."/>
        </authorList>
    </citation>
    <scope>NUCLEOTIDE SEQUENCE [LARGE SCALE GENOMIC DNA]</scope>
    <source>
        <strain>168</strain>
    </source>
</reference>
<reference key="4">
    <citation type="journal article" date="2009" name="Microbiology">
        <title>From a consortium sequence to a unified sequence: the Bacillus subtilis 168 reference genome a decade later.</title>
        <authorList>
            <person name="Barbe V."/>
            <person name="Cruveiller S."/>
            <person name="Kunst F."/>
            <person name="Lenoble P."/>
            <person name="Meurice G."/>
            <person name="Sekowska A."/>
            <person name="Vallenet D."/>
            <person name="Wang T."/>
            <person name="Moszer I."/>
            <person name="Medigue C."/>
            <person name="Danchin A."/>
        </authorList>
    </citation>
    <scope>SEQUENCE REVISION TO 91</scope>
</reference>
<reference key="5">
    <citation type="journal article" date="2004" name="J. Bacteriol.">
        <title>Genes involved in formation of structured multicellular communities by Bacillus subtilis.</title>
        <authorList>
            <person name="Branda S.S."/>
            <person name="Gonzalez-Pastor J.E."/>
            <person name="Dervyn E."/>
            <person name="Ehrlich S.D."/>
            <person name="Losick R."/>
            <person name="Kolter R."/>
        </authorList>
    </citation>
    <scope>PROBABLE FUNCTION</scope>
</reference>
<reference key="6">
    <citation type="journal article" date="2005" name="Mol. Microbiol.">
        <title>A master regulator for biofilm formation by Bacillus subtilis.</title>
        <authorList>
            <person name="Kearns D.B."/>
            <person name="Chu F."/>
            <person name="Branda S.S."/>
            <person name="Kolter R."/>
            <person name="Losick R."/>
        </authorList>
    </citation>
    <scope>PROBABLE FUNCTION</scope>
    <scope>INDUCTION</scope>
    <scope>NOMENCLATURE</scope>
</reference>
<gene>
    <name type="primary">epsE</name>
    <name type="synonym">yveO</name>
    <name type="ordered locus">BSU34330</name>
</gene>
<dbReference type="EC" id="2.4.-.-"/>
<dbReference type="EMBL" id="Z71928">
    <property type="protein sequence ID" value="CAA96472.1"/>
    <property type="molecule type" value="Genomic_DNA"/>
</dbReference>
<dbReference type="EMBL" id="Z94043">
    <property type="protein sequence ID" value="CAB08027.1"/>
    <property type="molecule type" value="Genomic_DNA"/>
</dbReference>
<dbReference type="EMBL" id="AL009126">
    <property type="protein sequence ID" value="CAB15438.2"/>
    <property type="molecule type" value="Genomic_DNA"/>
</dbReference>
<dbReference type="PIR" id="D70036">
    <property type="entry name" value="D70036"/>
</dbReference>
<dbReference type="RefSeq" id="NP_391313.2">
    <property type="nucleotide sequence ID" value="NC_000964.3"/>
</dbReference>
<dbReference type="RefSeq" id="WP_003244557.1">
    <property type="nucleotide sequence ID" value="NZ_OZ025638.1"/>
</dbReference>
<dbReference type="SMR" id="P71054"/>
<dbReference type="FunCoup" id="P71054">
    <property type="interactions" value="36"/>
</dbReference>
<dbReference type="STRING" id="224308.BSU34330"/>
<dbReference type="CAZy" id="GT2">
    <property type="family name" value="Glycosyltransferase Family 2"/>
</dbReference>
<dbReference type="PaxDb" id="224308-BSU34330"/>
<dbReference type="EnsemblBacteria" id="CAB15438">
    <property type="protein sequence ID" value="CAB15438"/>
    <property type="gene ID" value="BSU_34330"/>
</dbReference>
<dbReference type="GeneID" id="938633"/>
<dbReference type="KEGG" id="bsu:BSU34330"/>
<dbReference type="PATRIC" id="fig|224308.179.peg.3719"/>
<dbReference type="eggNOG" id="COG1215">
    <property type="taxonomic scope" value="Bacteria"/>
</dbReference>
<dbReference type="InParanoid" id="P71054"/>
<dbReference type="OrthoDB" id="9815829at2"/>
<dbReference type="PhylomeDB" id="P71054"/>
<dbReference type="BioCyc" id="BSUB:BSU34330-MONOMER"/>
<dbReference type="Proteomes" id="UP000001570">
    <property type="component" value="Chromosome"/>
</dbReference>
<dbReference type="GO" id="GO:0016757">
    <property type="term" value="F:glycosyltransferase activity"/>
    <property type="evidence" value="ECO:0007669"/>
    <property type="project" value="UniProtKB-KW"/>
</dbReference>
<dbReference type="GO" id="GO:0000271">
    <property type="term" value="P:polysaccharide biosynthetic process"/>
    <property type="evidence" value="ECO:0007669"/>
    <property type="project" value="UniProtKB-KW"/>
</dbReference>
<dbReference type="CDD" id="cd00761">
    <property type="entry name" value="Glyco_tranf_GTA_type"/>
    <property type="match status" value="1"/>
</dbReference>
<dbReference type="Gene3D" id="3.90.550.10">
    <property type="entry name" value="Spore Coat Polysaccharide Biosynthesis Protein SpsA, Chain A"/>
    <property type="match status" value="1"/>
</dbReference>
<dbReference type="InterPro" id="IPR001173">
    <property type="entry name" value="Glyco_trans_2-like"/>
</dbReference>
<dbReference type="InterPro" id="IPR050834">
    <property type="entry name" value="Glycosyltransf_2"/>
</dbReference>
<dbReference type="InterPro" id="IPR029044">
    <property type="entry name" value="Nucleotide-diphossugar_trans"/>
</dbReference>
<dbReference type="PANTHER" id="PTHR43685">
    <property type="entry name" value="GLYCOSYLTRANSFERASE"/>
    <property type="match status" value="1"/>
</dbReference>
<dbReference type="PANTHER" id="PTHR43685:SF5">
    <property type="entry name" value="GLYCOSYLTRANSFERASE EPSE-RELATED"/>
    <property type="match status" value="1"/>
</dbReference>
<dbReference type="Pfam" id="PF00535">
    <property type="entry name" value="Glycos_transf_2"/>
    <property type="match status" value="1"/>
</dbReference>
<dbReference type="SUPFAM" id="SSF53448">
    <property type="entry name" value="Nucleotide-diphospho-sugar transferases"/>
    <property type="match status" value="1"/>
</dbReference>
<feature type="chain" id="PRO_0000360692" description="Putative glycosyltransferase EpsE">
    <location>
        <begin position="1"/>
        <end position="278"/>
    </location>
</feature>
<feature type="sequence conflict" description="In Ref. 1; CAA96472 and 2; CAB08027." evidence="2" ref="1 2">
    <original>A</original>
    <variation>E</variation>
    <location>
        <position position="91"/>
    </location>
</feature>
<evidence type="ECO:0000269" key="1">
    <source>
    </source>
</evidence>
<evidence type="ECO:0000305" key="2"/>
<sequence length="278" mass="32147">MNSGPKVSVIMGIYNCERTLAESIESILSQSYKNWELILCDDASTDGTLRIAKQYAAHYSDRIKLIQNKTNKRLAASLNHCLSHATGDYIARQDGDDLSFPRRLEKQVAFLEKHRHYQVVGTGMLVFDEFGVRGARILPSVPEPGIMAKGTPFCHGTIMMRASAYRTLKGYRSVRRTRRMEDIDLWLRFFEEGFRGYNLQEALYKVREDSDAFKRRSFTYSIDNAILVYQACRRLKLPLSDYIYIAKPLIRAFMPAAVMNRYHKKRVMNQKEGLVKHE</sequence>